<name>LCL2_NEOFI</name>
<reference key="1">
    <citation type="journal article" date="2008" name="PLoS Genet.">
        <title>Genomic islands in the pathogenic filamentous fungus Aspergillus fumigatus.</title>
        <authorList>
            <person name="Fedorova N.D."/>
            <person name="Khaldi N."/>
            <person name="Joardar V.S."/>
            <person name="Maiti R."/>
            <person name="Amedeo P."/>
            <person name="Anderson M.J."/>
            <person name="Crabtree J."/>
            <person name="Silva J.C."/>
            <person name="Badger J.H."/>
            <person name="Albarraq A."/>
            <person name="Angiuoli S."/>
            <person name="Bussey H."/>
            <person name="Bowyer P."/>
            <person name="Cotty P.J."/>
            <person name="Dyer P.S."/>
            <person name="Egan A."/>
            <person name="Galens K."/>
            <person name="Fraser-Liggett C.M."/>
            <person name="Haas B.J."/>
            <person name="Inman J.M."/>
            <person name="Kent R."/>
            <person name="Lemieux S."/>
            <person name="Malavazi I."/>
            <person name="Orvis J."/>
            <person name="Roemer T."/>
            <person name="Ronning C.M."/>
            <person name="Sundaram J.P."/>
            <person name="Sutton G."/>
            <person name="Turner G."/>
            <person name="Venter J.C."/>
            <person name="White O.R."/>
            <person name="Whitty B.R."/>
            <person name="Youngman P."/>
            <person name="Wolfe K.H."/>
            <person name="Goldman G.H."/>
            <person name="Wortman J.R."/>
            <person name="Jiang B."/>
            <person name="Denning D.W."/>
            <person name="Nierman W.C."/>
        </authorList>
    </citation>
    <scope>NUCLEOTIDE SEQUENCE [LARGE SCALE GENOMIC DNA]</scope>
    <source>
        <strain>ATCC 1020 / DSM 3700 / CBS 544.65 / FGSC A1164 / JCM 1740 / NRRL 181 / WB 181</strain>
    </source>
</reference>
<evidence type="ECO:0000250" key="1"/>
<evidence type="ECO:0000255" key="2"/>
<evidence type="ECO:0000305" key="3"/>
<comment type="function">
    <text evidence="1">Probable component of the endoplasmic reticulum-associated degradation (ERAD) pathway.</text>
</comment>
<comment type="similarity">
    <text evidence="3">Belongs to the LCL2 family.</text>
</comment>
<keyword id="KW-1185">Reference proteome</keyword>
<keyword id="KW-0732">Signal</keyword>
<organism>
    <name type="scientific">Neosartorya fischeri (strain ATCC 1020 / DSM 3700 / CBS 544.65 / FGSC A1164 / JCM 1740 / NRRL 181 / WB 181)</name>
    <name type="common">Aspergillus fischerianus</name>
    <dbReference type="NCBI Taxonomy" id="331117"/>
    <lineage>
        <taxon>Eukaryota</taxon>
        <taxon>Fungi</taxon>
        <taxon>Dikarya</taxon>
        <taxon>Ascomycota</taxon>
        <taxon>Pezizomycotina</taxon>
        <taxon>Eurotiomycetes</taxon>
        <taxon>Eurotiomycetidae</taxon>
        <taxon>Eurotiales</taxon>
        <taxon>Aspergillaceae</taxon>
        <taxon>Aspergillus</taxon>
        <taxon>Aspergillus subgen. Fumigati</taxon>
    </lineage>
</organism>
<proteinExistence type="inferred from homology"/>
<dbReference type="EMBL" id="DS027686">
    <property type="protein sequence ID" value="EAW24233.1"/>
    <property type="molecule type" value="Genomic_DNA"/>
</dbReference>
<dbReference type="RefSeq" id="XP_001266130.1">
    <property type="nucleotide sequence ID" value="XM_001266129.1"/>
</dbReference>
<dbReference type="SMR" id="A1CZR3"/>
<dbReference type="STRING" id="331117.A1CZR3"/>
<dbReference type="EnsemblFungi" id="EAW24233">
    <property type="protein sequence ID" value="EAW24233"/>
    <property type="gene ID" value="NFIA_038070"/>
</dbReference>
<dbReference type="GeneID" id="4592748"/>
<dbReference type="KEGG" id="nfi:NFIA_038070"/>
<dbReference type="VEuPathDB" id="FungiDB:NFIA_038070"/>
<dbReference type="eggNOG" id="ENOG502S416">
    <property type="taxonomic scope" value="Eukaryota"/>
</dbReference>
<dbReference type="HOGENOM" id="CLU_142363_0_0_1"/>
<dbReference type="OMA" id="DNYLCPD"/>
<dbReference type="OrthoDB" id="2234316at2759"/>
<dbReference type="Proteomes" id="UP000006702">
    <property type="component" value="Unassembled WGS sequence"/>
</dbReference>
<dbReference type="GO" id="GO:0036503">
    <property type="term" value="P:ERAD pathway"/>
    <property type="evidence" value="ECO:0007669"/>
    <property type="project" value="TreeGrafter"/>
</dbReference>
<dbReference type="CDD" id="cd23996">
    <property type="entry name" value="LCL2-like"/>
    <property type="match status" value="1"/>
</dbReference>
<dbReference type="InterPro" id="IPR034543">
    <property type="entry name" value="LCL2"/>
</dbReference>
<dbReference type="PANTHER" id="PTHR38425">
    <property type="entry name" value="LONG CHRONOLOGICAL LIFESPAN PROTEIN 2"/>
    <property type="match status" value="1"/>
</dbReference>
<dbReference type="PANTHER" id="PTHR38425:SF1">
    <property type="entry name" value="LONG CHRONOLOGICAL LIFESPAN PROTEIN 2"/>
    <property type="match status" value="1"/>
</dbReference>
<feature type="signal peptide" evidence="2">
    <location>
        <begin position="1"/>
        <end position="21"/>
    </location>
</feature>
<feature type="chain" id="PRO_0000408614" description="Long chronological lifespan protein 2">
    <location>
        <begin position="22"/>
        <end position="122"/>
    </location>
</feature>
<sequence length="122" mass="13344">MLSSWVRCLGALLLLASVAQAQFQFFEHMFGGGHQEHHQQNTQNSASDSARYQQLWEGTNCNKYLCPGTLACVDFPHHCPCAHPSVEDKVELGEGSAVCISKGGYKPGEAARKIELARKGLL</sequence>
<gene>
    <name type="primary">lcl2</name>
    <name type="ORF">NFIA_038070</name>
</gene>
<protein>
    <recommendedName>
        <fullName>Long chronological lifespan protein 2</fullName>
    </recommendedName>
</protein>
<accession>A1CZR3</accession>